<gene>
    <name evidence="1" type="primary">cca</name>
    <name type="ordered locus">Tgr7_0331</name>
</gene>
<reference key="1">
    <citation type="journal article" date="2011" name="Stand. Genomic Sci.">
        <title>Complete genome sequence of 'Thioalkalivibrio sulfidophilus' HL-EbGr7.</title>
        <authorList>
            <person name="Muyzer G."/>
            <person name="Sorokin D.Y."/>
            <person name="Mavromatis K."/>
            <person name="Lapidus A."/>
            <person name="Clum A."/>
            <person name="Ivanova N."/>
            <person name="Pati A."/>
            <person name="d'Haeseleer P."/>
            <person name="Woyke T."/>
            <person name="Kyrpides N.C."/>
        </authorList>
    </citation>
    <scope>NUCLEOTIDE SEQUENCE [LARGE SCALE GENOMIC DNA]</scope>
    <source>
        <strain>HL-EbGR7</strain>
    </source>
</reference>
<proteinExistence type="inferred from homology"/>
<comment type="function">
    <text evidence="1">Catalyzes the addition and repair of the essential 3'-terminal CCA sequence in tRNAs without using a nucleic acid template. Adds these three nucleotides in the order of C, C, and A to the tRNA nucleotide-73, using CTP and ATP as substrates and producing inorganic pyrophosphate. tRNA 3'-terminal CCA addition is required both for tRNA processing and repair. Also involved in tRNA surveillance by mediating tandem CCA addition to generate a CCACCA at the 3' terminus of unstable tRNAs. While stable tRNAs receive only 3'-terminal CCA, unstable tRNAs are marked with CCACCA and rapidly degraded.</text>
</comment>
<comment type="catalytic activity">
    <reaction evidence="1">
        <text>a tRNA precursor + 2 CTP + ATP = a tRNA with a 3' CCA end + 3 diphosphate</text>
        <dbReference type="Rhea" id="RHEA:14433"/>
        <dbReference type="Rhea" id="RHEA-COMP:10465"/>
        <dbReference type="Rhea" id="RHEA-COMP:10468"/>
        <dbReference type="ChEBI" id="CHEBI:30616"/>
        <dbReference type="ChEBI" id="CHEBI:33019"/>
        <dbReference type="ChEBI" id="CHEBI:37563"/>
        <dbReference type="ChEBI" id="CHEBI:74896"/>
        <dbReference type="ChEBI" id="CHEBI:83071"/>
        <dbReference type="EC" id="2.7.7.72"/>
    </reaction>
</comment>
<comment type="catalytic activity">
    <reaction evidence="1">
        <text>a tRNA with a 3' CCA end + 2 CTP + ATP = a tRNA with a 3' CCACCA end + 3 diphosphate</text>
        <dbReference type="Rhea" id="RHEA:76235"/>
        <dbReference type="Rhea" id="RHEA-COMP:10468"/>
        <dbReference type="Rhea" id="RHEA-COMP:18655"/>
        <dbReference type="ChEBI" id="CHEBI:30616"/>
        <dbReference type="ChEBI" id="CHEBI:33019"/>
        <dbReference type="ChEBI" id="CHEBI:37563"/>
        <dbReference type="ChEBI" id="CHEBI:83071"/>
        <dbReference type="ChEBI" id="CHEBI:195187"/>
    </reaction>
    <physiologicalReaction direction="left-to-right" evidence="1">
        <dbReference type="Rhea" id="RHEA:76236"/>
    </physiologicalReaction>
</comment>
<comment type="cofactor">
    <cofactor evidence="1">
        <name>Mg(2+)</name>
        <dbReference type="ChEBI" id="CHEBI:18420"/>
    </cofactor>
    <text evidence="1">Magnesium is required for nucleotidyltransferase activity.</text>
</comment>
<comment type="cofactor">
    <cofactor evidence="1">
        <name>Ni(2+)</name>
        <dbReference type="ChEBI" id="CHEBI:49786"/>
    </cofactor>
    <text evidence="1">Nickel for phosphatase activity.</text>
</comment>
<comment type="subunit">
    <text evidence="1">Monomer. Can also form homodimers and oligomers.</text>
</comment>
<comment type="domain">
    <text evidence="1">Comprises two domains: an N-terminal domain containing the nucleotidyltransferase activity and a C-terminal HD domain associated with both phosphodiesterase and phosphatase activities.</text>
</comment>
<comment type="miscellaneous">
    <text evidence="1">A single active site specifically recognizes both ATP and CTP and is responsible for their addition.</text>
</comment>
<comment type="similarity">
    <text evidence="1">Belongs to the tRNA nucleotidyltransferase/poly(A) polymerase family. Bacterial CCA-adding enzyme type 1 subfamily.</text>
</comment>
<protein>
    <recommendedName>
        <fullName evidence="1">Multifunctional CCA protein</fullName>
    </recommendedName>
    <domain>
        <recommendedName>
            <fullName evidence="1">CCA-adding enzyme</fullName>
            <ecNumber evidence="1">2.7.7.72</ecNumber>
        </recommendedName>
        <alternativeName>
            <fullName evidence="1">CCA tRNA nucleotidyltransferase</fullName>
        </alternativeName>
        <alternativeName>
            <fullName evidence="1">tRNA CCA-pyrophosphorylase</fullName>
        </alternativeName>
        <alternativeName>
            <fullName evidence="1">tRNA adenylyl-/cytidylyl-transferase</fullName>
        </alternativeName>
        <alternativeName>
            <fullName evidence="1">tRNA nucleotidyltransferase</fullName>
        </alternativeName>
        <alternativeName>
            <fullName evidence="1">tRNA-NT</fullName>
        </alternativeName>
    </domain>
    <domain>
        <recommendedName>
            <fullName evidence="1">2'-nucleotidase</fullName>
            <ecNumber evidence="1">3.1.3.-</ecNumber>
        </recommendedName>
    </domain>
    <domain>
        <recommendedName>
            <fullName evidence="1">2',3'-cyclic phosphodiesterase</fullName>
            <ecNumber evidence="1">3.1.4.-</ecNumber>
        </recommendedName>
    </domain>
    <domain>
        <recommendedName>
            <fullName evidence="1">Phosphatase</fullName>
            <ecNumber evidence="1">3.1.3.-</ecNumber>
        </recommendedName>
    </domain>
</protein>
<feature type="chain" id="PRO_1000165125" description="Multifunctional CCA protein">
    <location>
        <begin position="1"/>
        <end position="409"/>
    </location>
</feature>
<feature type="domain" description="HD" evidence="1">
    <location>
        <begin position="228"/>
        <end position="329"/>
    </location>
</feature>
<feature type="binding site" evidence="1">
    <location>
        <position position="8"/>
    </location>
    <ligand>
        <name>ATP</name>
        <dbReference type="ChEBI" id="CHEBI:30616"/>
    </ligand>
</feature>
<feature type="binding site" evidence="1">
    <location>
        <position position="8"/>
    </location>
    <ligand>
        <name>CTP</name>
        <dbReference type="ChEBI" id="CHEBI:37563"/>
    </ligand>
</feature>
<feature type="binding site" evidence="1">
    <location>
        <position position="11"/>
    </location>
    <ligand>
        <name>ATP</name>
        <dbReference type="ChEBI" id="CHEBI:30616"/>
    </ligand>
</feature>
<feature type="binding site" evidence="1">
    <location>
        <position position="11"/>
    </location>
    <ligand>
        <name>CTP</name>
        <dbReference type="ChEBI" id="CHEBI:37563"/>
    </ligand>
</feature>
<feature type="binding site" evidence="1">
    <location>
        <position position="21"/>
    </location>
    <ligand>
        <name>Mg(2+)</name>
        <dbReference type="ChEBI" id="CHEBI:18420"/>
    </ligand>
</feature>
<feature type="binding site" evidence="1">
    <location>
        <position position="23"/>
    </location>
    <ligand>
        <name>Mg(2+)</name>
        <dbReference type="ChEBI" id="CHEBI:18420"/>
    </ligand>
</feature>
<feature type="binding site" evidence="1">
    <location>
        <position position="91"/>
    </location>
    <ligand>
        <name>ATP</name>
        <dbReference type="ChEBI" id="CHEBI:30616"/>
    </ligand>
</feature>
<feature type="binding site" evidence="1">
    <location>
        <position position="91"/>
    </location>
    <ligand>
        <name>CTP</name>
        <dbReference type="ChEBI" id="CHEBI:37563"/>
    </ligand>
</feature>
<feature type="binding site" evidence="1">
    <location>
        <position position="137"/>
    </location>
    <ligand>
        <name>ATP</name>
        <dbReference type="ChEBI" id="CHEBI:30616"/>
    </ligand>
</feature>
<feature type="binding site" evidence="1">
    <location>
        <position position="137"/>
    </location>
    <ligand>
        <name>CTP</name>
        <dbReference type="ChEBI" id="CHEBI:37563"/>
    </ligand>
</feature>
<feature type="binding site" evidence="1">
    <location>
        <position position="140"/>
    </location>
    <ligand>
        <name>ATP</name>
        <dbReference type="ChEBI" id="CHEBI:30616"/>
    </ligand>
</feature>
<feature type="binding site" evidence="1">
    <location>
        <position position="140"/>
    </location>
    <ligand>
        <name>CTP</name>
        <dbReference type="ChEBI" id="CHEBI:37563"/>
    </ligand>
</feature>
<accession>B8GUR8</accession>
<organism>
    <name type="scientific">Thioalkalivibrio sulfidiphilus (strain HL-EbGR7)</name>
    <dbReference type="NCBI Taxonomy" id="396588"/>
    <lineage>
        <taxon>Bacteria</taxon>
        <taxon>Pseudomonadati</taxon>
        <taxon>Pseudomonadota</taxon>
        <taxon>Gammaproteobacteria</taxon>
        <taxon>Chromatiales</taxon>
        <taxon>Ectothiorhodospiraceae</taxon>
        <taxon>Thioalkalivibrio</taxon>
    </lineage>
</organism>
<evidence type="ECO:0000255" key="1">
    <source>
        <dbReference type="HAMAP-Rule" id="MF_01261"/>
    </source>
</evidence>
<keyword id="KW-0067">ATP-binding</keyword>
<keyword id="KW-0378">Hydrolase</keyword>
<keyword id="KW-0460">Magnesium</keyword>
<keyword id="KW-0479">Metal-binding</keyword>
<keyword id="KW-0511">Multifunctional enzyme</keyword>
<keyword id="KW-0533">Nickel</keyword>
<keyword id="KW-0547">Nucleotide-binding</keyword>
<keyword id="KW-0548">Nucleotidyltransferase</keyword>
<keyword id="KW-1185">Reference proteome</keyword>
<keyword id="KW-0692">RNA repair</keyword>
<keyword id="KW-0694">RNA-binding</keyword>
<keyword id="KW-0808">Transferase</keyword>
<keyword id="KW-0819">tRNA processing</keyword>
<dbReference type="EC" id="2.7.7.72" evidence="1"/>
<dbReference type="EC" id="3.1.3.-" evidence="1"/>
<dbReference type="EC" id="3.1.4.-" evidence="1"/>
<dbReference type="EMBL" id="CP001339">
    <property type="protein sequence ID" value="ACL71429.1"/>
    <property type="molecule type" value="Genomic_DNA"/>
</dbReference>
<dbReference type="RefSeq" id="WP_012636918.1">
    <property type="nucleotide sequence ID" value="NC_011901.1"/>
</dbReference>
<dbReference type="SMR" id="B8GUR8"/>
<dbReference type="STRING" id="396588.Tgr7_0331"/>
<dbReference type="KEGG" id="tgr:Tgr7_0331"/>
<dbReference type="eggNOG" id="COG0617">
    <property type="taxonomic scope" value="Bacteria"/>
</dbReference>
<dbReference type="HOGENOM" id="CLU_015961_1_1_6"/>
<dbReference type="OrthoDB" id="9805698at2"/>
<dbReference type="Proteomes" id="UP000002383">
    <property type="component" value="Chromosome"/>
</dbReference>
<dbReference type="GO" id="GO:0005524">
    <property type="term" value="F:ATP binding"/>
    <property type="evidence" value="ECO:0007669"/>
    <property type="project" value="UniProtKB-UniRule"/>
</dbReference>
<dbReference type="GO" id="GO:0004810">
    <property type="term" value="F:CCA tRNA nucleotidyltransferase activity"/>
    <property type="evidence" value="ECO:0007669"/>
    <property type="project" value="UniProtKB-UniRule"/>
</dbReference>
<dbReference type="GO" id="GO:0004112">
    <property type="term" value="F:cyclic-nucleotide phosphodiesterase activity"/>
    <property type="evidence" value="ECO:0007669"/>
    <property type="project" value="UniProtKB-UniRule"/>
</dbReference>
<dbReference type="GO" id="GO:0000287">
    <property type="term" value="F:magnesium ion binding"/>
    <property type="evidence" value="ECO:0007669"/>
    <property type="project" value="UniProtKB-UniRule"/>
</dbReference>
<dbReference type="GO" id="GO:0016791">
    <property type="term" value="F:phosphatase activity"/>
    <property type="evidence" value="ECO:0007669"/>
    <property type="project" value="UniProtKB-UniRule"/>
</dbReference>
<dbReference type="GO" id="GO:0000049">
    <property type="term" value="F:tRNA binding"/>
    <property type="evidence" value="ECO:0007669"/>
    <property type="project" value="UniProtKB-UniRule"/>
</dbReference>
<dbReference type="GO" id="GO:0042245">
    <property type="term" value="P:RNA repair"/>
    <property type="evidence" value="ECO:0007669"/>
    <property type="project" value="UniProtKB-KW"/>
</dbReference>
<dbReference type="GO" id="GO:0001680">
    <property type="term" value="P:tRNA 3'-terminal CCA addition"/>
    <property type="evidence" value="ECO:0007669"/>
    <property type="project" value="UniProtKB-UniRule"/>
</dbReference>
<dbReference type="CDD" id="cd00077">
    <property type="entry name" value="HDc"/>
    <property type="match status" value="1"/>
</dbReference>
<dbReference type="CDD" id="cd05398">
    <property type="entry name" value="NT_ClassII-CCAase"/>
    <property type="match status" value="1"/>
</dbReference>
<dbReference type="FunFam" id="1.10.3090.10:FF:000001">
    <property type="entry name" value="Multifunctional CCA protein"/>
    <property type="match status" value="1"/>
</dbReference>
<dbReference type="Gene3D" id="3.30.460.10">
    <property type="entry name" value="Beta Polymerase, domain 2"/>
    <property type="match status" value="1"/>
</dbReference>
<dbReference type="Gene3D" id="1.10.3090.10">
    <property type="entry name" value="cca-adding enzyme, domain 2"/>
    <property type="match status" value="1"/>
</dbReference>
<dbReference type="HAMAP" id="MF_01261">
    <property type="entry name" value="CCA_bact_type1"/>
    <property type="match status" value="1"/>
</dbReference>
<dbReference type="HAMAP" id="MF_01262">
    <property type="entry name" value="CCA_bact_type2"/>
    <property type="match status" value="1"/>
</dbReference>
<dbReference type="InterPro" id="IPR012006">
    <property type="entry name" value="CCA_bact"/>
</dbReference>
<dbReference type="InterPro" id="IPR003607">
    <property type="entry name" value="HD/PDEase_dom"/>
</dbReference>
<dbReference type="InterPro" id="IPR006674">
    <property type="entry name" value="HD_domain"/>
</dbReference>
<dbReference type="InterPro" id="IPR043519">
    <property type="entry name" value="NT_sf"/>
</dbReference>
<dbReference type="InterPro" id="IPR002646">
    <property type="entry name" value="PolA_pol_head_dom"/>
</dbReference>
<dbReference type="InterPro" id="IPR032828">
    <property type="entry name" value="PolyA_RNA-bd"/>
</dbReference>
<dbReference type="InterPro" id="IPR050124">
    <property type="entry name" value="tRNA_CCA-adding_enzyme"/>
</dbReference>
<dbReference type="NCBIfam" id="NF008137">
    <property type="entry name" value="PRK10885.1"/>
    <property type="match status" value="1"/>
</dbReference>
<dbReference type="PANTHER" id="PTHR47545">
    <property type="entry name" value="MULTIFUNCTIONAL CCA PROTEIN"/>
    <property type="match status" value="1"/>
</dbReference>
<dbReference type="PANTHER" id="PTHR47545:SF1">
    <property type="entry name" value="MULTIFUNCTIONAL CCA PROTEIN"/>
    <property type="match status" value="1"/>
</dbReference>
<dbReference type="Pfam" id="PF01966">
    <property type="entry name" value="HD"/>
    <property type="match status" value="1"/>
</dbReference>
<dbReference type="Pfam" id="PF01743">
    <property type="entry name" value="PolyA_pol"/>
    <property type="match status" value="1"/>
</dbReference>
<dbReference type="Pfam" id="PF12627">
    <property type="entry name" value="PolyA_pol_RNAbd"/>
    <property type="match status" value="1"/>
</dbReference>
<dbReference type="PIRSF" id="PIRSF000813">
    <property type="entry name" value="CCA_bact"/>
    <property type="match status" value="1"/>
</dbReference>
<dbReference type="SUPFAM" id="SSF81301">
    <property type="entry name" value="Nucleotidyltransferase"/>
    <property type="match status" value="1"/>
</dbReference>
<dbReference type="SUPFAM" id="SSF81891">
    <property type="entry name" value="Poly A polymerase C-terminal region-like"/>
    <property type="match status" value="1"/>
</dbReference>
<dbReference type="PROSITE" id="PS51831">
    <property type="entry name" value="HD"/>
    <property type="match status" value="1"/>
</dbReference>
<name>CCA_THISH</name>
<sequence>MKTYLVGGAVRDELLGLPVRERDWVVVGATAAQMLDLGYRQVGRDFPVFLHPETHEEHALARTERKTAPGYRGFVVHAEPDVTLEEDLLRRDLTINAMARDEAGGLIDPFNGRADLEARLLRHVSPAFAEDPVRILRVARFAARFAHLGFRVADETRALMRRMVAAGEVDALVPERVWQEMERALGEGSPATFFEVLRDCGALAVLFPEIERLFGVPQPPKYHPEIDTGVHTLMVLTQAARLSADATIRFAALTHDLGKGTTPADILPSHHGHEQRSVDLVHALCDRFRIPNAYRDLAVMVARWHGYSHRALELRPDTVLKALEGLDAFRRPERFEPFLLACEADYRGRTGFEDRPYPQADYLRAAHARCLAISAKDLVNEGLTGKAIGEALHARRVQALKQLKAEWGG</sequence>